<proteinExistence type="evidence at transcript level"/>
<reference key="1">
    <citation type="journal article" date="1995" name="Appl. Environ. Microbiol.">
        <title>Sequence variability in homologs of the aflatoxin pathway gene aflR distinguishes species in Aspergillus section Flavi.</title>
        <authorList>
            <person name="Chang P.-K."/>
            <person name="Bhatnagar D."/>
            <person name="Cleveland T.E."/>
            <person name="Bennett J.W."/>
        </authorList>
    </citation>
    <scope>NUCLEOTIDE SEQUENCE [MRNA]</scope>
</reference>
<reference key="2">
    <citation type="submission" date="1998-07" db="EMBL/GenBank/DDBJ databases">
        <authorList>
            <person name="Chang P.-K."/>
        </authorList>
    </citation>
    <scope>SEQUENCE REVISION</scope>
</reference>
<reference key="3">
    <citation type="journal article" date="1993" name="Appl. Environ. Microbiol.">
        <title>Cloning of the Aspergillus parasiticus apa-2 gene associated with the regulation of aflatoxin biosynthesis.</title>
        <authorList>
            <person name="Chang P.-K."/>
            <person name="Cary J.W."/>
            <person name="Bhatnagar D."/>
            <person name="Cleveland T.E."/>
            <person name="Bennett J.W."/>
            <person name="Linz J.E."/>
            <person name="Woloshuk C.P."/>
            <person name="Payne G.A."/>
        </authorList>
    </citation>
    <scope>NUCLEOTIDE SEQUENCE OF 1-406</scope>
    <source>
        <strain>ATCC 62882 / CP461 / SRRC 2043</strain>
    </source>
</reference>
<evidence type="ECO:0000255" key="1">
    <source>
        <dbReference type="PROSITE-ProRule" id="PRU00227"/>
    </source>
</evidence>
<evidence type="ECO:0000256" key="2">
    <source>
        <dbReference type="SAM" id="MobiDB-lite"/>
    </source>
</evidence>
<evidence type="ECO:0000305" key="3"/>
<protein>
    <recommendedName>
        <fullName>Aflatoxin biosynthesis regulatory protein</fullName>
    </recommendedName>
</protein>
<name>AFLR_ASPPA</name>
<comment type="function">
    <text>Involved in the regulation of aflatoxin biosynthesis. May have a role in nitrate assimilation and sclerotial morphogenesis.</text>
</comment>
<comment type="pathway">
    <text>Mycotoxin biosynthesis; aflatoxin biosynthesis.</text>
</comment>
<comment type="subcellular location">
    <subcellularLocation>
        <location evidence="1">Nucleus</location>
    </subcellularLocation>
</comment>
<gene>
    <name type="primary">aflR</name>
    <name type="synonym">apa-2</name>
</gene>
<sequence length="444" mass="47286">MVDHISPRASPGPIRSSQTRRARKLRDSCTSCASSKVRCTKEKPACARCIERGLACQYMVSKRMGRNPRAPSPLDSTRRPSESLPSAGSEQGLPAHNTYSTPHAHTQAHTHAHSHPQPHPQSHPQSNQPPHALPTPNGSSSVSAIFSHQSPPPLVETQGLGGDLAGQAQSTLSSLTVDSEFGGSLQSMEHGNHADFLAESTGSLFDAFLEVGTPMIDPFLESAPLPPFQARYCCFSLALQTLTCLFPHAPLGCQLRLTDGEDSSCNLMTTDMVISGNKKATDAVRKILGCSCAQDGYLLSMVVLIVLKVLGWYAAAAGTQCTSTAAGGETNSGSCSNSPATVSSGCLTEERVLHHPSMVGEDCVDEEDQPRVAAQLVLSELHRVQSLVNLLAKRLQEGGDDAAGIPAHHPASPFSLLGFSGLEANLRHRLRAVSSDIIDYLHRE</sequence>
<feature type="chain" id="PRO_0000114933" description="Aflatoxin biosynthesis regulatory protein">
    <location>
        <begin position="1"/>
        <end position="444"/>
    </location>
</feature>
<feature type="DNA-binding region" description="Zn(2)-C6 fungal-type" evidence="1">
    <location>
        <begin position="29"/>
        <end position="56"/>
    </location>
</feature>
<feature type="region of interest" description="Disordered" evidence="2">
    <location>
        <begin position="1"/>
        <end position="26"/>
    </location>
</feature>
<feature type="region of interest" description="Disordered" evidence="2">
    <location>
        <begin position="64"/>
        <end position="167"/>
    </location>
</feature>
<feature type="compositionally biased region" description="Basic residues" evidence="2">
    <location>
        <begin position="106"/>
        <end position="116"/>
    </location>
</feature>
<feature type="compositionally biased region" description="Low complexity" evidence="2">
    <location>
        <begin position="120"/>
        <end position="130"/>
    </location>
</feature>
<feature type="compositionally biased region" description="Polar residues" evidence="2">
    <location>
        <begin position="136"/>
        <end position="149"/>
    </location>
</feature>
<feature type="sequence conflict" description="In Ref. 3; L22177." evidence="3" ref="3">
    <original>A</original>
    <variation>R</variation>
    <location>
        <position position="374"/>
    </location>
</feature>
<feature type="sequence conflict" description="In Ref. 3; L22177." evidence="3" ref="3">
    <original>V</original>
    <variation>A</variation>
    <location>
        <position position="388"/>
    </location>
</feature>
<dbReference type="EMBL" id="L26222">
    <property type="protein sequence ID" value="AAC27357.1"/>
    <property type="molecule type" value="mRNA"/>
</dbReference>
<dbReference type="EMBL" id="L26220">
    <property type="protein sequence ID" value="AAA32685.1"/>
    <property type="status" value="ALT_SEQ"/>
    <property type="molecule type" value="Genomic_DNA"/>
</dbReference>
<dbReference type="EMBL" id="L22177">
    <property type="status" value="NOT_ANNOTATED_CDS"/>
    <property type="molecule type" value="Genomic_DNA"/>
</dbReference>
<dbReference type="SMR" id="P43651"/>
<dbReference type="VEuPathDB" id="FungiDB:BDV34DRAFT_127154"/>
<dbReference type="OMA" id="ACARCIE"/>
<dbReference type="UniPathway" id="UPA00287"/>
<dbReference type="GO" id="GO:0005634">
    <property type="term" value="C:nucleus"/>
    <property type="evidence" value="ECO:0007669"/>
    <property type="project" value="UniProtKB-SubCell"/>
</dbReference>
<dbReference type="GO" id="GO:0003677">
    <property type="term" value="F:DNA binding"/>
    <property type="evidence" value="ECO:0007669"/>
    <property type="project" value="UniProtKB-KW"/>
</dbReference>
<dbReference type="GO" id="GO:0000981">
    <property type="term" value="F:DNA-binding transcription factor activity, RNA polymerase II-specific"/>
    <property type="evidence" value="ECO:0007669"/>
    <property type="project" value="InterPro"/>
</dbReference>
<dbReference type="GO" id="GO:0008270">
    <property type="term" value="F:zinc ion binding"/>
    <property type="evidence" value="ECO:0007669"/>
    <property type="project" value="InterPro"/>
</dbReference>
<dbReference type="GO" id="GO:0045122">
    <property type="term" value="P:aflatoxin biosynthetic process"/>
    <property type="evidence" value="ECO:0007669"/>
    <property type="project" value="UniProtKB-UniPathway"/>
</dbReference>
<dbReference type="GO" id="GO:0009893">
    <property type="term" value="P:positive regulation of metabolic process"/>
    <property type="evidence" value="ECO:0007669"/>
    <property type="project" value="UniProtKB-ARBA"/>
</dbReference>
<dbReference type="CDD" id="cd00067">
    <property type="entry name" value="GAL4"/>
    <property type="match status" value="1"/>
</dbReference>
<dbReference type="Gene3D" id="4.10.240.10">
    <property type="entry name" value="Zn(2)-C6 fungal-type DNA-binding domain"/>
    <property type="match status" value="1"/>
</dbReference>
<dbReference type="InterPro" id="IPR013700">
    <property type="entry name" value="AflR"/>
</dbReference>
<dbReference type="InterPro" id="IPR050675">
    <property type="entry name" value="OAF3"/>
</dbReference>
<dbReference type="InterPro" id="IPR036864">
    <property type="entry name" value="Zn2-C6_fun-type_DNA-bd_sf"/>
</dbReference>
<dbReference type="InterPro" id="IPR001138">
    <property type="entry name" value="Zn2Cys6_DnaBD"/>
</dbReference>
<dbReference type="PANTHER" id="PTHR31069:SF31">
    <property type="entry name" value="MONODICTYPHENONE CLUSTER TRANSCRIPTION FACTOR-RELATED"/>
    <property type="match status" value="1"/>
</dbReference>
<dbReference type="PANTHER" id="PTHR31069">
    <property type="entry name" value="OLEATE-ACTIVATED TRANSCRIPTION FACTOR 1-RELATED"/>
    <property type="match status" value="1"/>
</dbReference>
<dbReference type="Pfam" id="PF08493">
    <property type="entry name" value="AflR"/>
    <property type="match status" value="1"/>
</dbReference>
<dbReference type="Pfam" id="PF00172">
    <property type="entry name" value="Zn_clus"/>
    <property type="match status" value="1"/>
</dbReference>
<dbReference type="PRINTS" id="PR00755">
    <property type="entry name" value="AFLATOXINBRP"/>
</dbReference>
<dbReference type="SMART" id="SM00066">
    <property type="entry name" value="GAL4"/>
    <property type="match status" value="1"/>
</dbReference>
<dbReference type="SUPFAM" id="SSF57701">
    <property type="entry name" value="Zn2/Cys6 DNA-binding domain"/>
    <property type="match status" value="1"/>
</dbReference>
<dbReference type="PROSITE" id="PS00463">
    <property type="entry name" value="ZN2_CY6_FUNGAL_1"/>
    <property type="match status" value="1"/>
</dbReference>
<dbReference type="PROSITE" id="PS50048">
    <property type="entry name" value="ZN2_CY6_FUNGAL_2"/>
    <property type="match status" value="1"/>
</dbReference>
<organism>
    <name type="scientific">Aspergillus parasiticus</name>
    <dbReference type="NCBI Taxonomy" id="5067"/>
    <lineage>
        <taxon>Eukaryota</taxon>
        <taxon>Fungi</taxon>
        <taxon>Dikarya</taxon>
        <taxon>Ascomycota</taxon>
        <taxon>Pezizomycotina</taxon>
        <taxon>Eurotiomycetes</taxon>
        <taxon>Eurotiomycetidae</taxon>
        <taxon>Eurotiales</taxon>
        <taxon>Aspergillaceae</taxon>
        <taxon>Aspergillus</taxon>
        <taxon>Aspergillus subgen. Circumdati</taxon>
    </lineage>
</organism>
<accession>P43651</accession>
<accession>Q12409</accession>
<keyword id="KW-0238">DNA-binding</keyword>
<keyword id="KW-0479">Metal-binding</keyword>
<keyword id="KW-0539">Nucleus</keyword>
<keyword id="KW-0804">Transcription</keyword>
<keyword id="KW-0805">Transcription regulation</keyword>
<keyword id="KW-0862">Zinc</keyword>